<comment type="cofactor">
    <cofactor evidence="1">
        <name>Mg(2+)</name>
        <dbReference type="ChEBI" id="CHEBI:18420"/>
    </cofactor>
    <cofactor evidence="1">
        <name>Mn(2+)</name>
        <dbReference type="ChEBI" id="CHEBI:29035"/>
    </cofactor>
    <text evidence="1">Binds 2 magnesium or manganese ions per subunit.</text>
</comment>
<comment type="similarity">
    <text evidence="1">Belongs to the RimK family.</text>
</comment>
<reference key="1">
    <citation type="submission" date="2006-12" db="EMBL/GenBank/DDBJ databases">
        <title>Complete sequence of Shewanella amazonensis SB2B.</title>
        <authorList>
            <consortium name="US DOE Joint Genome Institute"/>
            <person name="Copeland A."/>
            <person name="Lucas S."/>
            <person name="Lapidus A."/>
            <person name="Barry K."/>
            <person name="Detter J.C."/>
            <person name="Glavina del Rio T."/>
            <person name="Hammon N."/>
            <person name="Israni S."/>
            <person name="Dalin E."/>
            <person name="Tice H."/>
            <person name="Pitluck S."/>
            <person name="Munk A.C."/>
            <person name="Brettin T."/>
            <person name="Bruce D."/>
            <person name="Han C."/>
            <person name="Tapia R."/>
            <person name="Gilna P."/>
            <person name="Schmutz J."/>
            <person name="Larimer F."/>
            <person name="Land M."/>
            <person name="Hauser L."/>
            <person name="Kyrpides N."/>
            <person name="Mikhailova N."/>
            <person name="Fredrickson J."/>
            <person name="Richardson P."/>
        </authorList>
    </citation>
    <scope>NUCLEOTIDE SEQUENCE [LARGE SCALE GENOMIC DNA]</scope>
    <source>
        <strain>ATCC BAA-1098 / SB2B</strain>
    </source>
</reference>
<feature type="chain" id="PRO_0000340546" description="Probable alpha-L-glutamate ligase 1">
    <location>
        <begin position="1"/>
        <end position="301"/>
    </location>
</feature>
<feature type="domain" description="ATP-grasp" evidence="1">
    <location>
        <begin position="104"/>
        <end position="287"/>
    </location>
</feature>
<feature type="binding site" evidence="1">
    <location>
        <position position="141"/>
    </location>
    <ligand>
        <name>ATP</name>
        <dbReference type="ChEBI" id="CHEBI:30616"/>
    </ligand>
</feature>
<feature type="binding site" evidence="1">
    <location>
        <begin position="178"/>
        <end position="179"/>
    </location>
    <ligand>
        <name>ATP</name>
        <dbReference type="ChEBI" id="CHEBI:30616"/>
    </ligand>
</feature>
<feature type="binding site" evidence="1">
    <location>
        <position position="187"/>
    </location>
    <ligand>
        <name>ATP</name>
        <dbReference type="ChEBI" id="CHEBI:30616"/>
    </ligand>
</feature>
<feature type="binding site" evidence="1">
    <location>
        <begin position="211"/>
        <end position="213"/>
    </location>
    <ligand>
        <name>ATP</name>
        <dbReference type="ChEBI" id="CHEBI:30616"/>
    </ligand>
</feature>
<feature type="binding site" evidence="1">
    <location>
        <position position="248"/>
    </location>
    <ligand>
        <name>Mg(2+)</name>
        <dbReference type="ChEBI" id="CHEBI:18420"/>
        <label>1</label>
    </ligand>
</feature>
<feature type="binding site" evidence="1">
    <location>
        <position position="248"/>
    </location>
    <ligand>
        <name>Mn(2+)</name>
        <dbReference type="ChEBI" id="CHEBI:29035"/>
        <label>1</label>
    </ligand>
</feature>
<feature type="binding site" evidence="1">
    <location>
        <position position="260"/>
    </location>
    <ligand>
        <name>Mg(2+)</name>
        <dbReference type="ChEBI" id="CHEBI:18420"/>
        <label>1</label>
    </ligand>
</feature>
<feature type="binding site" evidence="1">
    <location>
        <position position="260"/>
    </location>
    <ligand>
        <name>Mg(2+)</name>
        <dbReference type="ChEBI" id="CHEBI:18420"/>
        <label>2</label>
    </ligand>
</feature>
<feature type="binding site" evidence="1">
    <location>
        <position position="260"/>
    </location>
    <ligand>
        <name>Mn(2+)</name>
        <dbReference type="ChEBI" id="CHEBI:29035"/>
        <label>1</label>
    </ligand>
</feature>
<feature type="binding site" evidence="1">
    <location>
        <position position="260"/>
    </location>
    <ligand>
        <name>Mn(2+)</name>
        <dbReference type="ChEBI" id="CHEBI:29035"/>
        <label>2</label>
    </ligand>
</feature>
<feature type="binding site" evidence="1">
    <location>
        <position position="262"/>
    </location>
    <ligand>
        <name>Mg(2+)</name>
        <dbReference type="ChEBI" id="CHEBI:18420"/>
        <label>2</label>
    </ligand>
</feature>
<feature type="binding site" evidence="1">
    <location>
        <position position="262"/>
    </location>
    <ligand>
        <name>Mn(2+)</name>
        <dbReference type="ChEBI" id="CHEBI:29035"/>
        <label>2</label>
    </ligand>
</feature>
<evidence type="ECO:0000255" key="1">
    <source>
        <dbReference type="HAMAP-Rule" id="MF_01552"/>
    </source>
</evidence>
<keyword id="KW-0067">ATP-binding</keyword>
<keyword id="KW-0436">Ligase</keyword>
<keyword id="KW-0460">Magnesium</keyword>
<keyword id="KW-0464">Manganese</keyword>
<keyword id="KW-0479">Metal-binding</keyword>
<keyword id="KW-0547">Nucleotide-binding</keyword>
<keyword id="KW-0648">Protein biosynthesis</keyword>
<keyword id="KW-1185">Reference proteome</keyword>
<sequence length="301" mass="32363">MRIAVLSQGPELYSTRRLVEAAKERGHEVRVINPLECYMNINMRASSIHIAGEELPIFDAVIPRIGSAITFYGCAVLRQFEMMGVYTLNESVAVTRSRDKLRSMQLMSRRGIGLPITGFANKPSDIPDLIEMVGGAPLVIKLLEGTQGIGVVLAETRKAAESVIEAFMGLKANIMVQEYIREANGADIRCFVLGDKVVAAMKRQAAPGEFRSNLHRGGSATLVKLTPEERSVAVRAAKTMGLNVAGVDLLRSNHGPLVMEVNSSPGLEGIEGATGKDVAGAIIAFIEKAAHKKPKQTGARG</sequence>
<protein>
    <recommendedName>
        <fullName evidence="1">Probable alpha-L-glutamate ligase 1</fullName>
        <ecNumber evidence="1">6.3.2.-</ecNumber>
    </recommendedName>
</protein>
<accession>A1S550</accession>
<dbReference type="EC" id="6.3.2.-" evidence="1"/>
<dbReference type="EMBL" id="CP000507">
    <property type="protein sequence ID" value="ABL99506.1"/>
    <property type="molecule type" value="Genomic_DNA"/>
</dbReference>
<dbReference type="SMR" id="A1S550"/>
<dbReference type="STRING" id="326297.Sama_1299"/>
<dbReference type="KEGG" id="saz:Sama_1299"/>
<dbReference type="eggNOG" id="COG0189">
    <property type="taxonomic scope" value="Bacteria"/>
</dbReference>
<dbReference type="HOGENOM" id="CLU_054353_0_1_6"/>
<dbReference type="OrthoDB" id="3865600at2"/>
<dbReference type="Proteomes" id="UP000009175">
    <property type="component" value="Chromosome"/>
</dbReference>
<dbReference type="GO" id="GO:0005737">
    <property type="term" value="C:cytoplasm"/>
    <property type="evidence" value="ECO:0007669"/>
    <property type="project" value="TreeGrafter"/>
</dbReference>
<dbReference type="GO" id="GO:0005524">
    <property type="term" value="F:ATP binding"/>
    <property type="evidence" value="ECO:0007669"/>
    <property type="project" value="UniProtKB-UniRule"/>
</dbReference>
<dbReference type="GO" id="GO:0046872">
    <property type="term" value="F:metal ion binding"/>
    <property type="evidence" value="ECO:0007669"/>
    <property type="project" value="UniProtKB-KW"/>
</dbReference>
<dbReference type="GO" id="GO:0018169">
    <property type="term" value="F:ribosomal S6-glutamic acid ligase activity"/>
    <property type="evidence" value="ECO:0007669"/>
    <property type="project" value="TreeGrafter"/>
</dbReference>
<dbReference type="GO" id="GO:0036211">
    <property type="term" value="P:protein modification process"/>
    <property type="evidence" value="ECO:0007669"/>
    <property type="project" value="InterPro"/>
</dbReference>
<dbReference type="GO" id="GO:0009432">
    <property type="term" value="P:SOS response"/>
    <property type="evidence" value="ECO:0007669"/>
    <property type="project" value="TreeGrafter"/>
</dbReference>
<dbReference type="GO" id="GO:0006412">
    <property type="term" value="P:translation"/>
    <property type="evidence" value="ECO:0007669"/>
    <property type="project" value="UniProtKB-KW"/>
</dbReference>
<dbReference type="FunFam" id="3.40.50.20:FF:000004">
    <property type="entry name" value="Probable alpha-L-glutamate ligase"/>
    <property type="match status" value="1"/>
</dbReference>
<dbReference type="FunFam" id="3.30.1490.20:FF:000005">
    <property type="entry name" value="Probable alpha-L-glutamate ligase 1"/>
    <property type="match status" value="1"/>
</dbReference>
<dbReference type="FunFam" id="3.30.470.20:FF:000016">
    <property type="entry name" value="Ribosomal protein S6--L-glutamate ligase"/>
    <property type="match status" value="1"/>
</dbReference>
<dbReference type="Gene3D" id="3.40.50.20">
    <property type="match status" value="1"/>
</dbReference>
<dbReference type="Gene3D" id="3.30.1490.20">
    <property type="entry name" value="ATP-grasp fold, A domain"/>
    <property type="match status" value="1"/>
</dbReference>
<dbReference type="Gene3D" id="3.30.470.20">
    <property type="entry name" value="ATP-grasp fold, B domain"/>
    <property type="match status" value="1"/>
</dbReference>
<dbReference type="HAMAP" id="MF_01552">
    <property type="entry name" value="RimK"/>
    <property type="match status" value="1"/>
</dbReference>
<dbReference type="InterPro" id="IPR011761">
    <property type="entry name" value="ATP-grasp"/>
</dbReference>
<dbReference type="InterPro" id="IPR013651">
    <property type="entry name" value="ATP-grasp_RimK-type"/>
</dbReference>
<dbReference type="InterPro" id="IPR013815">
    <property type="entry name" value="ATP_grasp_subdomain_1"/>
</dbReference>
<dbReference type="InterPro" id="IPR023533">
    <property type="entry name" value="RimK"/>
</dbReference>
<dbReference type="InterPro" id="IPR041107">
    <property type="entry name" value="Rimk_N"/>
</dbReference>
<dbReference type="InterPro" id="IPR004666">
    <property type="entry name" value="Rp_bS6_RimK/Lys_biosynth_LsyX"/>
</dbReference>
<dbReference type="NCBIfam" id="NF007764">
    <property type="entry name" value="PRK10446.1"/>
    <property type="match status" value="1"/>
</dbReference>
<dbReference type="NCBIfam" id="TIGR00768">
    <property type="entry name" value="rimK_fam"/>
    <property type="match status" value="1"/>
</dbReference>
<dbReference type="PANTHER" id="PTHR21621:SF7">
    <property type="entry name" value="RIBOSOMAL PROTEIN BS6--L-GLUTAMATE LIGASE"/>
    <property type="match status" value="1"/>
</dbReference>
<dbReference type="PANTHER" id="PTHR21621">
    <property type="entry name" value="RIBOSOMAL PROTEIN S6 MODIFICATION PROTEIN"/>
    <property type="match status" value="1"/>
</dbReference>
<dbReference type="Pfam" id="PF08443">
    <property type="entry name" value="RimK"/>
    <property type="match status" value="1"/>
</dbReference>
<dbReference type="Pfam" id="PF18030">
    <property type="entry name" value="Rimk_N"/>
    <property type="match status" value="1"/>
</dbReference>
<dbReference type="SUPFAM" id="SSF56059">
    <property type="entry name" value="Glutathione synthetase ATP-binding domain-like"/>
    <property type="match status" value="1"/>
</dbReference>
<dbReference type="PROSITE" id="PS50975">
    <property type="entry name" value="ATP_GRASP"/>
    <property type="match status" value="1"/>
</dbReference>
<gene>
    <name evidence="1" type="primary">rimK1</name>
    <name type="ordered locus">Sama_1299</name>
</gene>
<proteinExistence type="inferred from homology"/>
<organism>
    <name type="scientific">Shewanella amazonensis (strain ATCC BAA-1098 / SB2B)</name>
    <dbReference type="NCBI Taxonomy" id="326297"/>
    <lineage>
        <taxon>Bacteria</taxon>
        <taxon>Pseudomonadati</taxon>
        <taxon>Pseudomonadota</taxon>
        <taxon>Gammaproteobacteria</taxon>
        <taxon>Alteromonadales</taxon>
        <taxon>Shewanellaceae</taxon>
        <taxon>Shewanella</taxon>
    </lineage>
</organism>
<name>RIMK1_SHEAM</name>